<proteinExistence type="inferred from homology"/>
<evidence type="ECO:0000255" key="1">
    <source>
        <dbReference type="HAMAP-Rule" id="MF_01588"/>
    </source>
</evidence>
<evidence type="ECO:0000256" key="2">
    <source>
        <dbReference type="SAM" id="MobiDB-lite"/>
    </source>
</evidence>
<evidence type="ECO:0000305" key="3"/>
<comment type="function">
    <text evidence="1">DNA ligase that catalyzes the formation of phosphodiester linkages between 5'-phosphoryl and 3'-hydroxyl groups in double-stranded DNA using NAD as a coenzyme and as the energy source for the reaction. It is essential for DNA replication and repair of damaged DNA.</text>
</comment>
<comment type="catalytic activity">
    <reaction evidence="1">
        <text>NAD(+) + (deoxyribonucleotide)n-3'-hydroxyl + 5'-phospho-(deoxyribonucleotide)m = (deoxyribonucleotide)n+m + AMP + beta-nicotinamide D-nucleotide.</text>
        <dbReference type="EC" id="6.5.1.2"/>
    </reaction>
</comment>
<comment type="cofactor">
    <cofactor evidence="1">
        <name>Mg(2+)</name>
        <dbReference type="ChEBI" id="CHEBI:18420"/>
    </cofactor>
    <cofactor evidence="1">
        <name>Mn(2+)</name>
        <dbReference type="ChEBI" id="CHEBI:29035"/>
    </cofactor>
</comment>
<comment type="similarity">
    <text evidence="1">Belongs to the NAD-dependent DNA ligase family. LigA subfamily.</text>
</comment>
<comment type="sequence caution" evidence="3">
    <conflict type="erroneous initiation">
        <sequence resource="EMBL-CDS" id="CAC42149"/>
    </conflict>
</comment>
<gene>
    <name evidence="1" type="primary">ligA2</name>
    <name type="ordered locus">SCO7522</name>
    <name type="ORF">SCBAC25F8.14c</name>
</gene>
<name>DNLJ2_STRCO</name>
<feature type="chain" id="PRO_0000313474" description="DNA ligase 2">
    <location>
        <begin position="1"/>
        <end position="700"/>
    </location>
</feature>
<feature type="domain" description="BRCT" evidence="1">
    <location>
        <begin position="615"/>
        <end position="700"/>
    </location>
</feature>
<feature type="region of interest" description="Disordered" evidence="2">
    <location>
        <begin position="590"/>
        <end position="621"/>
    </location>
</feature>
<feature type="active site" description="N6-AMP-lysine intermediate" evidence="1">
    <location>
        <position position="122"/>
    </location>
</feature>
<feature type="binding site" evidence="1">
    <location>
        <begin position="42"/>
        <end position="46"/>
    </location>
    <ligand>
        <name>NAD(+)</name>
        <dbReference type="ChEBI" id="CHEBI:57540"/>
    </ligand>
</feature>
<feature type="binding site" evidence="1">
    <location>
        <begin position="89"/>
        <end position="90"/>
    </location>
    <ligand>
        <name>NAD(+)</name>
        <dbReference type="ChEBI" id="CHEBI:57540"/>
    </ligand>
</feature>
<feature type="binding site" evidence="1">
    <location>
        <position position="143"/>
    </location>
    <ligand>
        <name>NAD(+)</name>
        <dbReference type="ChEBI" id="CHEBI:57540"/>
    </ligand>
</feature>
<feature type="binding site" evidence="1">
    <location>
        <position position="177"/>
    </location>
    <ligand>
        <name>NAD(+)</name>
        <dbReference type="ChEBI" id="CHEBI:57540"/>
    </ligand>
</feature>
<feature type="binding site" evidence="1">
    <location>
        <position position="303"/>
    </location>
    <ligand>
        <name>NAD(+)</name>
        <dbReference type="ChEBI" id="CHEBI:57540"/>
    </ligand>
</feature>
<feature type="binding site" evidence="1">
    <location>
        <position position="327"/>
    </location>
    <ligand>
        <name>NAD(+)</name>
        <dbReference type="ChEBI" id="CHEBI:57540"/>
    </ligand>
</feature>
<feature type="binding site" evidence="1">
    <location>
        <position position="421"/>
    </location>
    <ligand>
        <name>Zn(2+)</name>
        <dbReference type="ChEBI" id="CHEBI:29105"/>
    </ligand>
</feature>
<feature type="binding site" evidence="1">
    <location>
        <position position="424"/>
    </location>
    <ligand>
        <name>Zn(2+)</name>
        <dbReference type="ChEBI" id="CHEBI:29105"/>
    </ligand>
</feature>
<feature type="binding site" evidence="1">
    <location>
        <position position="437"/>
    </location>
    <ligand>
        <name>Zn(2+)</name>
        <dbReference type="ChEBI" id="CHEBI:29105"/>
    </ligand>
</feature>
<feature type="binding site" evidence="1">
    <location>
        <position position="443"/>
    </location>
    <ligand>
        <name>Zn(2+)</name>
        <dbReference type="ChEBI" id="CHEBI:29105"/>
    </ligand>
</feature>
<protein>
    <recommendedName>
        <fullName evidence="1">DNA ligase 2</fullName>
        <ecNumber evidence="1">6.5.1.2</ecNumber>
    </recommendedName>
    <alternativeName>
        <fullName evidence="1">Polydeoxyribonucleotide synthase [NAD(+)] 2</fullName>
    </alternativeName>
</protein>
<reference key="1">
    <citation type="journal article" date="2002" name="Nature">
        <title>Complete genome sequence of the model actinomycete Streptomyces coelicolor A3(2).</title>
        <authorList>
            <person name="Bentley S.D."/>
            <person name="Chater K.F."/>
            <person name="Cerdeno-Tarraga A.-M."/>
            <person name="Challis G.L."/>
            <person name="Thomson N.R."/>
            <person name="James K.D."/>
            <person name="Harris D.E."/>
            <person name="Quail M.A."/>
            <person name="Kieser H."/>
            <person name="Harper D."/>
            <person name="Bateman A."/>
            <person name="Brown S."/>
            <person name="Chandra G."/>
            <person name="Chen C.W."/>
            <person name="Collins M."/>
            <person name="Cronin A."/>
            <person name="Fraser A."/>
            <person name="Goble A."/>
            <person name="Hidalgo J."/>
            <person name="Hornsby T."/>
            <person name="Howarth S."/>
            <person name="Huang C.-H."/>
            <person name="Kieser T."/>
            <person name="Larke L."/>
            <person name="Murphy L.D."/>
            <person name="Oliver K."/>
            <person name="O'Neil S."/>
            <person name="Rabbinowitsch E."/>
            <person name="Rajandream M.A."/>
            <person name="Rutherford K.M."/>
            <person name="Rutter S."/>
            <person name="Seeger K."/>
            <person name="Saunders D."/>
            <person name="Sharp S."/>
            <person name="Squares R."/>
            <person name="Squares S."/>
            <person name="Taylor K."/>
            <person name="Warren T."/>
            <person name="Wietzorrek A."/>
            <person name="Woodward J.R."/>
            <person name="Barrell B.G."/>
            <person name="Parkhill J."/>
            <person name="Hopwood D.A."/>
        </authorList>
    </citation>
    <scope>NUCLEOTIDE SEQUENCE [LARGE SCALE GENOMIC DNA]</scope>
    <source>
        <strain>ATCC BAA-471 / A3(2) / M145</strain>
    </source>
</reference>
<organism>
    <name type="scientific">Streptomyces coelicolor (strain ATCC BAA-471 / A3(2) / M145)</name>
    <dbReference type="NCBI Taxonomy" id="100226"/>
    <lineage>
        <taxon>Bacteria</taxon>
        <taxon>Bacillati</taxon>
        <taxon>Actinomycetota</taxon>
        <taxon>Actinomycetes</taxon>
        <taxon>Kitasatosporales</taxon>
        <taxon>Streptomycetaceae</taxon>
        <taxon>Streptomyces</taxon>
        <taxon>Streptomyces albidoflavus group</taxon>
    </lineage>
</organism>
<accession>Q93IZ8</accession>
<sequence>MIRAMTTPAAVIVDATAYAQAVEDAAHAAAAYYAGGSSPLDDDAYDRLARGIAAWEAEHPDEVLPDSPTGKVAGGAAEGDVPHTVPMLSLDNVFSPEEFTVWTASLARRIDREVTRFSVGPKLDGLAVAARYREGRLTRLITRGDGTAGEDVSHAIGTVEGLPGTLAEPVTVEVRGEILMTTAQFEHANEVRIRHGGQPFANPRNAAAGTLRAKERAYTVPMTFFGYGLLALPGTDAALAGRLEELPYSELMETAAGLGVHTSAGTAVPDVVVGTPEQVVARVQEIAALRAELPFGIDGIVVKADLAADRRAAGSGSRAPRWAIAYKLPAVEKITRLLEVEWNVGRTGIIAPRGVLEPVVIEGSTITYATLHNPADITRRGLRLGDHVMVHRAGDVIPRIEAPVAHLRTGEEQPIVFPEACPRCGSDIDTSEERWRCAQGRNCHLVASLAYAAGRDQLDIEGLGTTRVVQLVEAGLVADLADLFLLRREQLLALERMGETSTDNLLAALARAKEQPLSRVLCALGVRGTGRSMSRRIARYFATMDHIRAADAEAMQRVDGIGVEKAPSVVAEIAELAPLIDRLAAAGVNMTEPGATPPRPADTDGADGATAEAPGDGGPLAGMKVVVTGAMTGNLERLSRNEMNELIERAGGRSSSSVSKNTSLVVAGEGAGSKRAKAEQLGVRLATPEEFAVLVAGLLS</sequence>
<dbReference type="EC" id="6.5.1.2" evidence="1"/>
<dbReference type="EMBL" id="AL939131">
    <property type="protein sequence ID" value="CAC42149.1"/>
    <property type="status" value="ALT_INIT"/>
    <property type="molecule type" value="Genomic_DNA"/>
</dbReference>
<dbReference type="RefSeq" id="NP_631567.1">
    <property type="nucleotide sequence ID" value="NC_003888.3"/>
</dbReference>
<dbReference type="SMR" id="Q93IZ8"/>
<dbReference type="STRING" id="100226.gene:17765182"/>
<dbReference type="PaxDb" id="100226-SCO7522"/>
<dbReference type="KEGG" id="sco:SCO7522"/>
<dbReference type="PATRIC" id="fig|100226.15.peg.7636"/>
<dbReference type="eggNOG" id="COG0272">
    <property type="taxonomic scope" value="Bacteria"/>
</dbReference>
<dbReference type="HOGENOM" id="CLU_007764_2_0_11"/>
<dbReference type="InParanoid" id="Q93IZ8"/>
<dbReference type="OrthoDB" id="9759736at2"/>
<dbReference type="PhylomeDB" id="Q93IZ8"/>
<dbReference type="Proteomes" id="UP000001973">
    <property type="component" value="Chromosome"/>
</dbReference>
<dbReference type="GO" id="GO:0005829">
    <property type="term" value="C:cytosol"/>
    <property type="evidence" value="ECO:0000318"/>
    <property type="project" value="GO_Central"/>
</dbReference>
<dbReference type="GO" id="GO:0003911">
    <property type="term" value="F:DNA ligase (NAD+) activity"/>
    <property type="evidence" value="ECO:0000318"/>
    <property type="project" value="GO_Central"/>
</dbReference>
<dbReference type="GO" id="GO:0046872">
    <property type="term" value="F:metal ion binding"/>
    <property type="evidence" value="ECO:0007669"/>
    <property type="project" value="UniProtKB-KW"/>
</dbReference>
<dbReference type="GO" id="GO:0006281">
    <property type="term" value="P:DNA repair"/>
    <property type="evidence" value="ECO:0007669"/>
    <property type="project" value="UniProtKB-KW"/>
</dbReference>
<dbReference type="GO" id="GO:0006260">
    <property type="term" value="P:DNA replication"/>
    <property type="evidence" value="ECO:0007669"/>
    <property type="project" value="UniProtKB-KW"/>
</dbReference>
<dbReference type="CDD" id="cd17748">
    <property type="entry name" value="BRCT_DNA_ligase_like"/>
    <property type="match status" value="1"/>
</dbReference>
<dbReference type="CDD" id="cd00114">
    <property type="entry name" value="LIGANc"/>
    <property type="match status" value="1"/>
</dbReference>
<dbReference type="FunFam" id="3.30.470.30:FF:000046">
    <property type="entry name" value="DNA ligase"/>
    <property type="match status" value="1"/>
</dbReference>
<dbReference type="Gene3D" id="6.20.10.30">
    <property type="match status" value="1"/>
</dbReference>
<dbReference type="Gene3D" id="1.10.150.20">
    <property type="entry name" value="5' to 3' exonuclease, C-terminal subdomain"/>
    <property type="match status" value="2"/>
</dbReference>
<dbReference type="Gene3D" id="3.40.50.10190">
    <property type="entry name" value="BRCT domain"/>
    <property type="match status" value="1"/>
</dbReference>
<dbReference type="Gene3D" id="3.30.470.30">
    <property type="entry name" value="DNA ligase/mRNA capping enzyme"/>
    <property type="match status" value="1"/>
</dbReference>
<dbReference type="Gene3D" id="1.10.287.610">
    <property type="entry name" value="Helix hairpin bin"/>
    <property type="match status" value="1"/>
</dbReference>
<dbReference type="Gene3D" id="2.40.50.140">
    <property type="entry name" value="Nucleic acid-binding proteins"/>
    <property type="match status" value="1"/>
</dbReference>
<dbReference type="HAMAP" id="MF_01588">
    <property type="entry name" value="DNA_ligase_A"/>
    <property type="match status" value="1"/>
</dbReference>
<dbReference type="InterPro" id="IPR001357">
    <property type="entry name" value="BRCT_dom"/>
</dbReference>
<dbReference type="InterPro" id="IPR036420">
    <property type="entry name" value="BRCT_dom_sf"/>
</dbReference>
<dbReference type="InterPro" id="IPR041663">
    <property type="entry name" value="DisA/LigA_HHH"/>
</dbReference>
<dbReference type="InterPro" id="IPR001679">
    <property type="entry name" value="DNA_ligase"/>
</dbReference>
<dbReference type="InterPro" id="IPR018239">
    <property type="entry name" value="DNA_ligase_AS"/>
</dbReference>
<dbReference type="InterPro" id="IPR013839">
    <property type="entry name" value="DNAligase_adenylation"/>
</dbReference>
<dbReference type="InterPro" id="IPR013840">
    <property type="entry name" value="DNAligase_N"/>
</dbReference>
<dbReference type="InterPro" id="IPR012340">
    <property type="entry name" value="NA-bd_OB-fold"/>
</dbReference>
<dbReference type="InterPro" id="IPR004150">
    <property type="entry name" value="NAD_DNA_ligase_OB"/>
</dbReference>
<dbReference type="InterPro" id="IPR010994">
    <property type="entry name" value="RuvA_2-like"/>
</dbReference>
<dbReference type="NCBIfam" id="TIGR00575">
    <property type="entry name" value="dnlj"/>
    <property type="match status" value="1"/>
</dbReference>
<dbReference type="NCBIfam" id="NF005932">
    <property type="entry name" value="PRK07956.1"/>
    <property type="match status" value="1"/>
</dbReference>
<dbReference type="Pfam" id="PF00533">
    <property type="entry name" value="BRCT"/>
    <property type="match status" value="1"/>
</dbReference>
<dbReference type="Pfam" id="PF01653">
    <property type="entry name" value="DNA_ligase_aden"/>
    <property type="match status" value="1"/>
</dbReference>
<dbReference type="Pfam" id="PF03120">
    <property type="entry name" value="DNA_ligase_OB"/>
    <property type="match status" value="1"/>
</dbReference>
<dbReference type="Pfam" id="PF12826">
    <property type="entry name" value="HHH_2"/>
    <property type="match status" value="1"/>
</dbReference>
<dbReference type="PIRSF" id="PIRSF001604">
    <property type="entry name" value="LigA"/>
    <property type="match status" value="1"/>
</dbReference>
<dbReference type="SMART" id="SM00292">
    <property type="entry name" value="BRCT"/>
    <property type="match status" value="1"/>
</dbReference>
<dbReference type="SMART" id="SM00532">
    <property type="entry name" value="LIGANc"/>
    <property type="match status" value="1"/>
</dbReference>
<dbReference type="SUPFAM" id="SSF52113">
    <property type="entry name" value="BRCT domain"/>
    <property type="match status" value="1"/>
</dbReference>
<dbReference type="SUPFAM" id="SSF56091">
    <property type="entry name" value="DNA ligase/mRNA capping enzyme, catalytic domain"/>
    <property type="match status" value="1"/>
</dbReference>
<dbReference type="SUPFAM" id="SSF50249">
    <property type="entry name" value="Nucleic acid-binding proteins"/>
    <property type="match status" value="1"/>
</dbReference>
<dbReference type="SUPFAM" id="SSF47781">
    <property type="entry name" value="RuvA domain 2-like"/>
    <property type="match status" value="1"/>
</dbReference>
<dbReference type="PROSITE" id="PS50172">
    <property type="entry name" value="BRCT"/>
    <property type="match status" value="1"/>
</dbReference>
<dbReference type="PROSITE" id="PS01055">
    <property type="entry name" value="DNA_LIGASE_N1"/>
    <property type="match status" value="1"/>
</dbReference>
<keyword id="KW-0227">DNA damage</keyword>
<keyword id="KW-0234">DNA repair</keyword>
<keyword id="KW-0235">DNA replication</keyword>
<keyword id="KW-0436">Ligase</keyword>
<keyword id="KW-0460">Magnesium</keyword>
<keyword id="KW-0464">Manganese</keyword>
<keyword id="KW-0479">Metal-binding</keyword>
<keyword id="KW-0520">NAD</keyword>
<keyword id="KW-1185">Reference proteome</keyword>
<keyword id="KW-0862">Zinc</keyword>